<keyword id="KW-0240">DNA-directed RNA polymerase</keyword>
<keyword id="KW-0548">Nucleotidyltransferase</keyword>
<keyword id="KW-0804">Transcription</keyword>
<keyword id="KW-0808">Transferase</keyword>
<sequence length="178" mass="20626">MDLKNLTQEERSELSLIDVAHFILEQRKETILFPELVKEIQAFLGLKDAEIRERLVQFYTDMNIDGNFISLGNNTWGLRAWYPMDAIDEEVQTQTTPKKKRKSDDDDDEDEEILDDDVDYDDEEIVEELGEEEISLADVLLDEDEDDDDHLPDGIEGDLATVEDDYTDGDYTEDPEDK</sequence>
<accession>Q71WL9</accession>
<dbReference type="EMBL" id="AE017262">
    <property type="protein sequence ID" value="AAT05297.1"/>
    <property type="molecule type" value="Genomic_DNA"/>
</dbReference>
<dbReference type="RefSeq" id="WP_003728401.1">
    <property type="nucleotide sequence ID" value="NC_002973.6"/>
</dbReference>
<dbReference type="SMR" id="Q71WL9"/>
<dbReference type="GeneID" id="93235969"/>
<dbReference type="KEGG" id="lmf:LMOf2365_2532"/>
<dbReference type="HOGENOM" id="CLU_116648_0_0_9"/>
<dbReference type="GO" id="GO:0000428">
    <property type="term" value="C:DNA-directed RNA polymerase complex"/>
    <property type="evidence" value="ECO:0007669"/>
    <property type="project" value="UniProtKB-KW"/>
</dbReference>
<dbReference type="GO" id="GO:0003899">
    <property type="term" value="F:DNA-directed RNA polymerase activity"/>
    <property type="evidence" value="ECO:0007669"/>
    <property type="project" value="UniProtKB-UniRule"/>
</dbReference>
<dbReference type="GO" id="GO:0006351">
    <property type="term" value="P:DNA-templated transcription"/>
    <property type="evidence" value="ECO:0007669"/>
    <property type="project" value="InterPro"/>
</dbReference>
<dbReference type="GO" id="GO:0006355">
    <property type="term" value="P:regulation of DNA-templated transcription"/>
    <property type="evidence" value="ECO:0007669"/>
    <property type="project" value="UniProtKB-UniRule"/>
</dbReference>
<dbReference type="Gene3D" id="1.10.10.1250">
    <property type="entry name" value="RNA polymerase, subunit delta, N-terminal domain"/>
    <property type="match status" value="1"/>
</dbReference>
<dbReference type="HAMAP" id="MF_00357">
    <property type="entry name" value="RNApol_bact_RpoE"/>
    <property type="match status" value="1"/>
</dbReference>
<dbReference type="InterPro" id="IPR007759">
    <property type="entry name" value="Asxl_HARE-HTH"/>
</dbReference>
<dbReference type="InterPro" id="IPR038087">
    <property type="entry name" value="RNAP_delta_N_dom_sf"/>
</dbReference>
<dbReference type="InterPro" id="IPR029757">
    <property type="entry name" value="RpoE"/>
</dbReference>
<dbReference type="NCBIfam" id="TIGR04567">
    <property type="entry name" value="RNAP_delt_lowGC"/>
    <property type="match status" value="1"/>
</dbReference>
<dbReference type="Pfam" id="PF05066">
    <property type="entry name" value="HARE-HTH"/>
    <property type="match status" value="1"/>
</dbReference>
<dbReference type="PROSITE" id="PS51913">
    <property type="entry name" value="HTH_HARE"/>
    <property type="match status" value="1"/>
</dbReference>
<evidence type="ECO:0000255" key="1">
    <source>
        <dbReference type="HAMAP-Rule" id="MF_00357"/>
    </source>
</evidence>
<evidence type="ECO:0000255" key="2">
    <source>
        <dbReference type="PROSITE-ProRule" id="PRU01261"/>
    </source>
</evidence>
<evidence type="ECO:0000256" key="3">
    <source>
        <dbReference type="SAM" id="MobiDB-lite"/>
    </source>
</evidence>
<name>RPOE_LISMF</name>
<protein>
    <recommendedName>
        <fullName evidence="1">Probable DNA-directed RNA polymerase subunit delta</fullName>
    </recommendedName>
    <alternativeName>
        <fullName evidence="1">RNAP delta factor</fullName>
    </alternativeName>
</protein>
<proteinExistence type="inferred from homology"/>
<organism>
    <name type="scientific">Listeria monocytogenes serotype 4b (strain F2365)</name>
    <dbReference type="NCBI Taxonomy" id="265669"/>
    <lineage>
        <taxon>Bacteria</taxon>
        <taxon>Bacillati</taxon>
        <taxon>Bacillota</taxon>
        <taxon>Bacilli</taxon>
        <taxon>Bacillales</taxon>
        <taxon>Listeriaceae</taxon>
        <taxon>Listeria</taxon>
    </lineage>
</organism>
<feature type="chain" id="PRO_0000204316" description="Probable DNA-directed RNA polymerase subunit delta">
    <location>
        <begin position="1"/>
        <end position="178"/>
    </location>
</feature>
<feature type="domain" description="HTH HARE-type" evidence="2">
    <location>
        <begin position="14"/>
        <end position="81"/>
    </location>
</feature>
<feature type="region of interest" description="Disordered" evidence="3">
    <location>
        <begin position="89"/>
        <end position="122"/>
    </location>
</feature>
<feature type="region of interest" description="Disordered" evidence="3">
    <location>
        <begin position="141"/>
        <end position="178"/>
    </location>
</feature>
<feature type="compositionally biased region" description="Acidic residues" evidence="3">
    <location>
        <begin position="105"/>
        <end position="122"/>
    </location>
</feature>
<feature type="compositionally biased region" description="Acidic residues" evidence="3">
    <location>
        <begin position="141"/>
        <end position="150"/>
    </location>
</feature>
<feature type="compositionally biased region" description="Acidic residues" evidence="3">
    <location>
        <begin position="161"/>
        <end position="178"/>
    </location>
</feature>
<reference key="1">
    <citation type="journal article" date="2004" name="Nucleic Acids Res.">
        <title>Whole genome comparisons of serotype 4b and 1/2a strains of the food-borne pathogen Listeria monocytogenes reveal new insights into the core genome components of this species.</title>
        <authorList>
            <person name="Nelson K.E."/>
            <person name="Fouts D.E."/>
            <person name="Mongodin E.F."/>
            <person name="Ravel J."/>
            <person name="DeBoy R.T."/>
            <person name="Kolonay J.F."/>
            <person name="Rasko D.A."/>
            <person name="Angiuoli S.V."/>
            <person name="Gill S.R."/>
            <person name="Paulsen I.T."/>
            <person name="Peterson J.D."/>
            <person name="White O."/>
            <person name="Nelson W.C."/>
            <person name="Nierman W.C."/>
            <person name="Beanan M.J."/>
            <person name="Brinkac L.M."/>
            <person name="Daugherty S.C."/>
            <person name="Dodson R.J."/>
            <person name="Durkin A.S."/>
            <person name="Madupu R."/>
            <person name="Haft D.H."/>
            <person name="Selengut J."/>
            <person name="Van Aken S.E."/>
            <person name="Khouri H.M."/>
            <person name="Fedorova N."/>
            <person name="Forberger H.A."/>
            <person name="Tran B."/>
            <person name="Kathariou S."/>
            <person name="Wonderling L.D."/>
            <person name="Uhlich G.A."/>
            <person name="Bayles D.O."/>
            <person name="Luchansky J.B."/>
            <person name="Fraser C.M."/>
        </authorList>
    </citation>
    <scope>NUCLEOTIDE SEQUENCE [LARGE SCALE GENOMIC DNA]</scope>
    <source>
        <strain>F2365</strain>
    </source>
</reference>
<gene>
    <name evidence="1" type="primary">rpoE</name>
    <name type="ordered locus">LMOf2365_2532</name>
</gene>
<comment type="function">
    <text evidence="1">Participates in both the initiation and recycling phases of transcription. In the presence of the delta subunit, RNAP displays an increased specificity of transcription, a decreased affinity for nucleic acids, and an increased efficiency of RNA synthesis because of enhanced recycling.</text>
</comment>
<comment type="subunit">
    <text evidence="1">RNAP is composed of a core of 2 alpha, a beta and a beta' subunits. The core is associated with a delta subunit and one of several sigma factors.</text>
</comment>
<comment type="similarity">
    <text evidence="1">Belongs to the RpoE family.</text>
</comment>